<protein>
    <recommendedName>
        <fullName evidence="1">GTP cyclohydrolase 1</fullName>
        <ecNumber evidence="1">3.5.4.16</ecNumber>
    </recommendedName>
    <alternativeName>
        <fullName evidence="1">GTP cyclohydrolase I</fullName>
        <shortName evidence="1">GTP-CH-I</shortName>
    </alternativeName>
</protein>
<name>GCH1_HELP2</name>
<dbReference type="EC" id="3.5.4.16" evidence="1"/>
<dbReference type="EMBL" id="CP001217">
    <property type="protein sequence ID" value="ACJ08077.1"/>
    <property type="molecule type" value="Genomic_DNA"/>
</dbReference>
<dbReference type="SMR" id="B6JME9"/>
<dbReference type="KEGG" id="hpp:HPP12_0925"/>
<dbReference type="HOGENOM" id="CLU_049768_3_4_7"/>
<dbReference type="UniPathway" id="UPA00848">
    <property type="reaction ID" value="UER00151"/>
</dbReference>
<dbReference type="Proteomes" id="UP000008198">
    <property type="component" value="Chromosome"/>
</dbReference>
<dbReference type="GO" id="GO:0005737">
    <property type="term" value="C:cytoplasm"/>
    <property type="evidence" value="ECO:0007669"/>
    <property type="project" value="TreeGrafter"/>
</dbReference>
<dbReference type="GO" id="GO:0005525">
    <property type="term" value="F:GTP binding"/>
    <property type="evidence" value="ECO:0007669"/>
    <property type="project" value="UniProtKB-KW"/>
</dbReference>
<dbReference type="GO" id="GO:0003934">
    <property type="term" value="F:GTP cyclohydrolase I activity"/>
    <property type="evidence" value="ECO:0007669"/>
    <property type="project" value="UniProtKB-UniRule"/>
</dbReference>
<dbReference type="GO" id="GO:0008270">
    <property type="term" value="F:zinc ion binding"/>
    <property type="evidence" value="ECO:0007669"/>
    <property type="project" value="UniProtKB-UniRule"/>
</dbReference>
<dbReference type="GO" id="GO:0006730">
    <property type="term" value="P:one-carbon metabolic process"/>
    <property type="evidence" value="ECO:0007669"/>
    <property type="project" value="UniProtKB-UniRule"/>
</dbReference>
<dbReference type="GO" id="GO:0006729">
    <property type="term" value="P:tetrahydrobiopterin biosynthetic process"/>
    <property type="evidence" value="ECO:0007669"/>
    <property type="project" value="TreeGrafter"/>
</dbReference>
<dbReference type="GO" id="GO:0046654">
    <property type="term" value="P:tetrahydrofolate biosynthetic process"/>
    <property type="evidence" value="ECO:0007669"/>
    <property type="project" value="UniProtKB-UniRule"/>
</dbReference>
<dbReference type="FunFam" id="3.30.1130.10:FF:000001">
    <property type="entry name" value="GTP cyclohydrolase 1"/>
    <property type="match status" value="1"/>
</dbReference>
<dbReference type="Gene3D" id="1.10.286.10">
    <property type="match status" value="1"/>
</dbReference>
<dbReference type="Gene3D" id="3.30.1130.10">
    <property type="match status" value="1"/>
</dbReference>
<dbReference type="HAMAP" id="MF_00223">
    <property type="entry name" value="FolE"/>
    <property type="match status" value="1"/>
</dbReference>
<dbReference type="InterPro" id="IPR043133">
    <property type="entry name" value="GTP-CH-I_C/QueF"/>
</dbReference>
<dbReference type="InterPro" id="IPR043134">
    <property type="entry name" value="GTP-CH-I_N"/>
</dbReference>
<dbReference type="InterPro" id="IPR001474">
    <property type="entry name" value="GTP_CycHdrlase_I"/>
</dbReference>
<dbReference type="InterPro" id="IPR018234">
    <property type="entry name" value="GTP_CycHdrlase_I_CS"/>
</dbReference>
<dbReference type="InterPro" id="IPR020602">
    <property type="entry name" value="GTP_CycHdrlase_I_dom"/>
</dbReference>
<dbReference type="NCBIfam" id="TIGR00063">
    <property type="entry name" value="folE"/>
    <property type="match status" value="1"/>
</dbReference>
<dbReference type="NCBIfam" id="NF006825">
    <property type="entry name" value="PRK09347.1-2"/>
    <property type="match status" value="1"/>
</dbReference>
<dbReference type="NCBIfam" id="NF006826">
    <property type="entry name" value="PRK09347.1-3"/>
    <property type="match status" value="1"/>
</dbReference>
<dbReference type="PANTHER" id="PTHR11109:SF7">
    <property type="entry name" value="GTP CYCLOHYDROLASE 1"/>
    <property type="match status" value="1"/>
</dbReference>
<dbReference type="PANTHER" id="PTHR11109">
    <property type="entry name" value="GTP CYCLOHYDROLASE I"/>
    <property type="match status" value="1"/>
</dbReference>
<dbReference type="Pfam" id="PF01227">
    <property type="entry name" value="GTP_cyclohydroI"/>
    <property type="match status" value="1"/>
</dbReference>
<dbReference type="SUPFAM" id="SSF55620">
    <property type="entry name" value="Tetrahydrobiopterin biosynthesis enzymes-like"/>
    <property type="match status" value="1"/>
</dbReference>
<dbReference type="PROSITE" id="PS00859">
    <property type="entry name" value="GTP_CYCLOHYDROL_1_1"/>
    <property type="match status" value="1"/>
</dbReference>
<dbReference type="PROSITE" id="PS00860">
    <property type="entry name" value="GTP_CYCLOHYDROL_1_2"/>
    <property type="match status" value="1"/>
</dbReference>
<sequence>MENFFNQFFENIGEDKNREGLKETPKRVQELWKFLYKGYKEDPKVALKSAYFQGVCDEMIVAQNIEFYSTCEHHLLPFLGNISVGYIPKEKIVGISAIAKLIEIYSKRLQIQERLTTQIAETFDEIIEPRGVIVVCEAKHLCMSMQGVQKQNAIIKTSVLRGLFKKDPKTRAEFMQLLKS</sequence>
<accession>B6JME9</accession>
<reference key="1">
    <citation type="submission" date="2008-10" db="EMBL/GenBank/DDBJ databases">
        <title>The complete genome sequence of Helicobacter pylori strain P12.</title>
        <authorList>
            <person name="Fischer W."/>
            <person name="Windhager L."/>
            <person name="Karnholz A."/>
            <person name="Zeiller M."/>
            <person name="Zimmer R."/>
            <person name="Haas R."/>
        </authorList>
    </citation>
    <scope>NUCLEOTIDE SEQUENCE [LARGE SCALE GENOMIC DNA]</scope>
    <source>
        <strain>P12</strain>
    </source>
</reference>
<feature type="chain" id="PRO_1000100175" description="GTP cyclohydrolase 1">
    <location>
        <begin position="1"/>
        <end position="180"/>
    </location>
</feature>
<feature type="binding site" evidence="1">
    <location>
        <position position="71"/>
    </location>
    <ligand>
        <name>Zn(2+)</name>
        <dbReference type="ChEBI" id="CHEBI:29105"/>
    </ligand>
</feature>
<feature type="binding site" evidence="1">
    <location>
        <position position="74"/>
    </location>
    <ligand>
        <name>Zn(2+)</name>
        <dbReference type="ChEBI" id="CHEBI:29105"/>
    </ligand>
</feature>
<feature type="binding site" evidence="1">
    <location>
        <position position="142"/>
    </location>
    <ligand>
        <name>Zn(2+)</name>
        <dbReference type="ChEBI" id="CHEBI:29105"/>
    </ligand>
</feature>
<comment type="catalytic activity">
    <reaction evidence="1">
        <text>GTP + H2O = 7,8-dihydroneopterin 3'-triphosphate + formate + H(+)</text>
        <dbReference type="Rhea" id="RHEA:17473"/>
        <dbReference type="ChEBI" id="CHEBI:15377"/>
        <dbReference type="ChEBI" id="CHEBI:15378"/>
        <dbReference type="ChEBI" id="CHEBI:15740"/>
        <dbReference type="ChEBI" id="CHEBI:37565"/>
        <dbReference type="ChEBI" id="CHEBI:58462"/>
        <dbReference type="EC" id="3.5.4.16"/>
    </reaction>
</comment>
<comment type="pathway">
    <text evidence="1">Cofactor biosynthesis; 7,8-dihydroneopterin triphosphate biosynthesis; 7,8-dihydroneopterin triphosphate from GTP: step 1/1.</text>
</comment>
<comment type="subunit">
    <text evidence="1">Homomer.</text>
</comment>
<comment type="similarity">
    <text evidence="1">Belongs to the GTP cyclohydrolase I family.</text>
</comment>
<proteinExistence type="inferred from homology"/>
<gene>
    <name evidence="1" type="primary">folE</name>
    <name type="ordered locus">HPP12_0925</name>
</gene>
<keyword id="KW-0342">GTP-binding</keyword>
<keyword id="KW-0378">Hydrolase</keyword>
<keyword id="KW-0479">Metal-binding</keyword>
<keyword id="KW-0547">Nucleotide-binding</keyword>
<keyword id="KW-0554">One-carbon metabolism</keyword>
<keyword id="KW-0862">Zinc</keyword>
<evidence type="ECO:0000255" key="1">
    <source>
        <dbReference type="HAMAP-Rule" id="MF_00223"/>
    </source>
</evidence>
<organism>
    <name type="scientific">Helicobacter pylori (strain P12)</name>
    <dbReference type="NCBI Taxonomy" id="570508"/>
    <lineage>
        <taxon>Bacteria</taxon>
        <taxon>Pseudomonadati</taxon>
        <taxon>Campylobacterota</taxon>
        <taxon>Epsilonproteobacteria</taxon>
        <taxon>Campylobacterales</taxon>
        <taxon>Helicobacteraceae</taxon>
        <taxon>Helicobacter</taxon>
    </lineage>
</organism>